<proteinExistence type="inferred from homology"/>
<protein>
    <recommendedName>
        <fullName evidence="1">Large ribosomal subunit protein bL34</fullName>
    </recommendedName>
    <alternativeName>
        <fullName evidence="3">50S ribosomal protein L34</fullName>
    </alternativeName>
</protein>
<evidence type="ECO:0000255" key="1">
    <source>
        <dbReference type="HAMAP-Rule" id="MF_00391"/>
    </source>
</evidence>
<evidence type="ECO:0000256" key="2">
    <source>
        <dbReference type="SAM" id="MobiDB-lite"/>
    </source>
</evidence>
<evidence type="ECO:0000305" key="3"/>
<comment type="similarity">
    <text evidence="1">Belongs to the bacterial ribosomal protein bL34 family.</text>
</comment>
<feature type="chain" id="PRO_1000080267" description="Large ribosomal subunit protein bL34">
    <location>
        <begin position="1"/>
        <end position="45"/>
    </location>
</feature>
<feature type="region of interest" description="Disordered" evidence="2">
    <location>
        <begin position="1"/>
        <end position="21"/>
    </location>
</feature>
<feature type="compositionally biased region" description="Polar residues" evidence="2">
    <location>
        <begin position="1"/>
        <end position="10"/>
    </location>
</feature>
<feature type="compositionally biased region" description="Basic residues" evidence="2">
    <location>
        <begin position="11"/>
        <end position="20"/>
    </location>
</feature>
<sequence>MSKRTFQPSNLKRKRSHGFRARMATVGGRKVLARRRAKGRARLSA</sequence>
<gene>
    <name evidence="1" type="primary">rpmH</name>
    <name type="ordered locus">Sbal195_4524</name>
</gene>
<name>RL34_SHEB9</name>
<dbReference type="EMBL" id="CP000891">
    <property type="protein sequence ID" value="ABX51681.1"/>
    <property type="molecule type" value="Genomic_DNA"/>
</dbReference>
<dbReference type="RefSeq" id="WP_006083827.1">
    <property type="nucleotide sequence ID" value="NC_009997.1"/>
</dbReference>
<dbReference type="SMR" id="A9KX23"/>
<dbReference type="GeneID" id="90572020"/>
<dbReference type="KEGG" id="sbn:Sbal195_4524"/>
<dbReference type="HOGENOM" id="CLU_129938_2_0_6"/>
<dbReference type="Proteomes" id="UP000000770">
    <property type="component" value="Chromosome"/>
</dbReference>
<dbReference type="GO" id="GO:1990904">
    <property type="term" value="C:ribonucleoprotein complex"/>
    <property type="evidence" value="ECO:0007669"/>
    <property type="project" value="UniProtKB-KW"/>
</dbReference>
<dbReference type="GO" id="GO:0005840">
    <property type="term" value="C:ribosome"/>
    <property type="evidence" value="ECO:0007669"/>
    <property type="project" value="UniProtKB-KW"/>
</dbReference>
<dbReference type="GO" id="GO:0003735">
    <property type="term" value="F:structural constituent of ribosome"/>
    <property type="evidence" value="ECO:0007669"/>
    <property type="project" value="InterPro"/>
</dbReference>
<dbReference type="GO" id="GO:0006412">
    <property type="term" value="P:translation"/>
    <property type="evidence" value="ECO:0007669"/>
    <property type="project" value="UniProtKB-UniRule"/>
</dbReference>
<dbReference type="FunFam" id="1.10.287.3980:FF:000001">
    <property type="entry name" value="Mitochondrial ribosomal protein L34"/>
    <property type="match status" value="1"/>
</dbReference>
<dbReference type="Gene3D" id="1.10.287.3980">
    <property type="match status" value="1"/>
</dbReference>
<dbReference type="HAMAP" id="MF_00391">
    <property type="entry name" value="Ribosomal_bL34"/>
    <property type="match status" value="1"/>
</dbReference>
<dbReference type="InterPro" id="IPR000271">
    <property type="entry name" value="Ribosomal_bL34"/>
</dbReference>
<dbReference type="InterPro" id="IPR020939">
    <property type="entry name" value="Ribosomal_bL34_CS"/>
</dbReference>
<dbReference type="NCBIfam" id="TIGR01030">
    <property type="entry name" value="rpmH_bact"/>
    <property type="match status" value="1"/>
</dbReference>
<dbReference type="PANTHER" id="PTHR14503:SF4">
    <property type="entry name" value="LARGE RIBOSOMAL SUBUNIT PROTEIN BL34M"/>
    <property type="match status" value="1"/>
</dbReference>
<dbReference type="PANTHER" id="PTHR14503">
    <property type="entry name" value="MITOCHONDRIAL RIBOSOMAL PROTEIN 34 FAMILY MEMBER"/>
    <property type="match status" value="1"/>
</dbReference>
<dbReference type="Pfam" id="PF00468">
    <property type="entry name" value="Ribosomal_L34"/>
    <property type="match status" value="1"/>
</dbReference>
<dbReference type="PROSITE" id="PS00784">
    <property type="entry name" value="RIBOSOMAL_L34"/>
    <property type="match status" value="1"/>
</dbReference>
<organism>
    <name type="scientific">Shewanella baltica (strain OS195)</name>
    <dbReference type="NCBI Taxonomy" id="399599"/>
    <lineage>
        <taxon>Bacteria</taxon>
        <taxon>Pseudomonadati</taxon>
        <taxon>Pseudomonadota</taxon>
        <taxon>Gammaproteobacteria</taxon>
        <taxon>Alteromonadales</taxon>
        <taxon>Shewanellaceae</taxon>
        <taxon>Shewanella</taxon>
    </lineage>
</organism>
<keyword id="KW-0687">Ribonucleoprotein</keyword>
<keyword id="KW-0689">Ribosomal protein</keyword>
<reference key="1">
    <citation type="submission" date="2007-11" db="EMBL/GenBank/DDBJ databases">
        <title>Complete sequence of chromosome of Shewanella baltica OS195.</title>
        <authorList>
            <consortium name="US DOE Joint Genome Institute"/>
            <person name="Copeland A."/>
            <person name="Lucas S."/>
            <person name="Lapidus A."/>
            <person name="Barry K."/>
            <person name="Glavina del Rio T."/>
            <person name="Dalin E."/>
            <person name="Tice H."/>
            <person name="Pitluck S."/>
            <person name="Chain P."/>
            <person name="Malfatti S."/>
            <person name="Shin M."/>
            <person name="Vergez L."/>
            <person name="Schmutz J."/>
            <person name="Larimer F."/>
            <person name="Land M."/>
            <person name="Hauser L."/>
            <person name="Kyrpides N."/>
            <person name="Kim E."/>
            <person name="Brettar I."/>
            <person name="Rodrigues J."/>
            <person name="Konstantinidis K."/>
            <person name="Klappenbach J."/>
            <person name="Hofle M."/>
            <person name="Tiedje J."/>
            <person name="Richardson P."/>
        </authorList>
    </citation>
    <scope>NUCLEOTIDE SEQUENCE [LARGE SCALE GENOMIC DNA]</scope>
    <source>
        <strain>OS195</strain>
    </source>
</reference>
<accession>A9KX23</accession>